<sequence length="3169" mass="351167">MHSAGTPGLSSRRTGNSTSFQPGPPPPPRLLLLLLLLLSLVSRVPAQPAAFGRALLSPGLAGAAGVPAEEAIVLANRGLRVPFGREVWLDPLHDLVLQVQPGDRCAVSVLDNDALAQRPGRLSPKRFPCDFGPGEVRYSHLGARSPSRDRVRLQLRYDAPGGAVVLPLVLEVEVVFTQLEVVTRNLPLVVEELLGTSNALDARSLEFAFQPETEECRVGILSGLGALPRYGELLHYPQVPGGAREGGAPETLLMDCKAFQELGVRYRHTAASRSPNRDWIPMVVELRSRGAPVGSPALKREHFQVLVRIRGGAENTAPKPSFVAMMMMEVDQFVLTALTPDMLAAEDAESPSDLLIFNLTSPFQPGQGYLVSTDDRSLPLSSFTQRDLRLLKIAYQPPSEDSDQERLFELELEVVDLEGAASDPFAFMVVVKPMNTMAPVVTRNTGLILYEGQSRPLTGPAGSGPQNLVISDEDDLEAVRLEVVAGLRHGHLVILGASSGSSAPKSFTVAELAAGQVVYQHDDRDGSLSDNLVLRMVDGGGRHQVQFLFPITLVPVDDQPPVLNANTGLTLAEGETVPILPLSLSATDMDSDDSLLLFVLESPFLTTGHLLLRQTHPPHEKQELLRGLWRKEGAFYERTVTEWQQQDITEGRLFYRHSGPHSPGPVTDQFTFRVQDNHDPPNQSGLQRFVIRIHPVDRLPPELGSGCPLRMVVQESQLTPLRKKWLRYTDLDTDDRELRYTVTQPPTDTDENHLPAPLGTLVLTDNPSVVVTHFTQAQINHHKIAYRPPGQELGVATRVAQFQFQVEDRAGNVAPGTFTLYLHPVDNQPPEILNTGFTIQEKGHHILSETELHVNDVDTDVAHISFTLTQAPKHGHMRVSGQILHVGGLFHLEDIKQGRVSYAHNGDKSLTDSCSLEVSDRHHVVPITLRVNVRPVDDEVPILSHPTGTLESYLDVLENGATEITANVIKGTNEETDDLMLTFLLEDPPLYGEILVNGIPAEQFTQRDILEGSVVYTHTSGEIGLLPKADSFNLSLSDMSQEWRIGGNTIQGVTIWVTILPVDSQAPEIFVGEQLIVMEGDKSVITSVHISAEDVDSLNDDILCTIVIQPTSGYVENISPAPGSEKSRAGIAISAFNLKDLRQGHINYVQSVHKGVEPVEDRFVFRCSDGINFSERQFFPIVIIPTNDEQPEMFMREFMVMEGMSLVIDTPILNAADADVPLDDLTFTITQFPTHGHIMNQLINGTVLVESFTLDQIIESSSIIYEHDDSETQEDSFVIKLTDGKHSVEKTVLIIVIPVDDETPRMTINNGLEIEIGDTKIINNKILMATDLDSEDKSLVYIIRYGPGHGLLQRRKPTGAFENITLGMNFTQDEVDRNLIQYVHLGQEGIRDLIKFDVTDGINPLIDRYFYVSIGSIDIVFPDVISKGVSLKEGGKVTLTTDLLSTSDLNSPDENLVFTITRAPMRGHLECTDQPGVSITSFTQLQLAGNKIYYIHTADDEVKMDSFEFQVTDGRNPVFRTFRISISDVDNKKPVVTIHKLVVSESENKLITPFELTVEDRDTPDKLLKFTITQVPIHGHLLFNNTRPVMVFTKQDLNENLISYKHDGTESSEDSFSFTVTDGTHTDFYVFPDTVFETRRPQVMKIQVLAVDNSVPQIAVNKGASTLRTLATGHLGFMITSKILKVEDRDSLHISLRFIVTEAPQHGYLLNLDKGNHSITQFTQADIDDMKICYVLREGANATSDMFYFAVEDGGGNKLTYQNFRLNWAWISFEKEYYLVNEDSKFLDVVLKRRGYLGETSFISIGTRDRTAEKDKDFKGKAQKQVQFNPGQTRATWRVRILSDGEHEQSETFQVVLSEPVLAALEFPTVATVEIVDPGDEPTVFIPQSKYSVEEDVGELFIPIRRSGDVSQELMVVCYTQQGTATGTVPTSVLSYSDYISRPEDHTSVVRFDKDEREKLCRIVIIDDSLYEEEETFHVLLSMPMGGRIGSEFPGAQVTIVPDKDDEPIFYFGDVEYSVDESAGYVEVQVWRTGTDLSKSSSVTVRSRKTDPPSADAGTDYVGISRNLDFAPGVNMQPVRVVILDDLGQPALEGIEKFELVLRMPMNAALGEPSKATVSINDSVSDLPKMQFKERIYTGSESDGQIVTMIHRTGDVQYRSSVRCYTRQGSAQVMMDFEERPNTDTSIITFLPGETEKPCILELMDDVLYEEVEELRLVLGTPQSNSPFGAAVGEQNETLIRIRDDADKTVIKFGETKFSVTEPKEPGESVVIRIPVIRQGDTSKVSIVRVHTKDGSATSGEDYHPVSEEIEFKEGETQHVVEIEVTFDGVREMREAFTVHLKPDENMIAEMQLTKAIVYIEEMSSMADVTFPSVPQIVSLLMYDDTSKAKESAEPMSGYPVICITACNPKYSDYDKTGSICASENINDTLTRYRWLISAPAGPDGVTSPMREVDFDTFFTSSKMVTLDSIYFQPGSRVQCAARAVNTNGDEGLELMSPIVTISREEGLCQPRVPGVVGAEPFSAKLRYTGPEDADYTNLIKLTVTMPHIDGMLPVISTRELSNFELTLSPDGTRVGNHKCSNLLDYTEVKTHYGFLTDATKNPEIIGETYPYQYSLSIRGSTTLRFYRNLNLEACLWEFVSYYDMSELLADCGGTIGTDGQVLNLVQSYVTLRVPLYVSYVFHSPVGVGGWQHFDLKSELRLTFVYDTAILWNDGIGSPPEAELQGSLYPTSMRIGDEGRLAVHFKTEAQFHGLFVLSHPASFTSSVIMSADHPGLTFSLRLIRSEPTYNQPVQQWSFVSDFAVRDYSGTYTVKLVPCTAPSHQEYRLPVTCNPREPVTFDLDIRFQQVSDPVAAEFSLNTQMYLLSKKSLWLSDGSMGFGQESDVAFAEGDIIYGRVMVDPVQNLGDSFYCSIEKVFLCTGADGYVPKYSPMNAEYGCLADSPSLLYRFKIVDKAQPETQATSFGNVLFNAKLAVDDPEAILLVNQPGSDGFKVDSTPLFQVALGREWYIHTIYTVRSKDNANRGIGKRSVEYHSLVSQGKPQSTTKSRKKREIRSTPSLAWEIGAENSRGTNIQHIALDRTKRQIPHGRAPPDGILPWELNSPSSAVSLVTVVGGTTVGLLTICLTVIAVLMCRGKESFRGKDAPKGSSSSEPMVPPQSHHNDSSEV</sequence>
<keyword id="KW-0025">Alternative splicing</keyword>
<keyword id="KW-0106">Calcium</keyword>
<keyword id="KW-0130">Cell adhesion</keyword>
<keyword id="KW-1003">Cell membrane</keyword>
<keyword id="KW-0217">Developmental protein</keyword>
<keyword id="KW-0225">Disease variant</keyword>
<keyword id="KW-0325">Glycoprotein</keyword>
<keyword id="KW-0472">Membrane</keyword>
<keyword id="KW-0479">Metal-binding</keyword>
<keyword id="KW-1267">Proteomics identification</keyword>
<keyword id="KW-1185">Reference proteome</keyword>
<keyword id="KW-0677">Repeat</keyword>
<keyword id="KW-0732">Signal</keyword>
<keyword id="KW-0812">Transmembrane</keyword>
<keyword id="KW-1133">Transmembrane helix</keyword>
<accession>Q5SZK8</accession>
<accession>Q4QQG1</accession>
<accession>Q5H9N8</accession>
<accession>Q5T6Q1</accession>
<accession>Q6N057</accession>
<accession>Q6ZSB4</accession>
<accession>Q7Z305</accession>
<accession>Q7Z341</accession>
<name>FREM2_HUMAN</name>
<proteinExistence type="evidence at protein level"/>
<dbReference type="EMBL" id="AC017111">
    <property type="status" value="NOT_ANNOTATED_CDS"/>
    <property type="molecule type" value="Genomic_DNA"/>
</dbReference>
<dbReference type="EMBL" id="AL354819">
    <property type="status" value="NOT_ANNOTATED_CDS"/>
    <property type="molecule type" value="Genomic_DNA"/>
</dbReference>
<dbReference type="EMBL" id="AL590007">
    <property type="status" value="NOT_ANNOTATED_CDS"/>
    <property type="molecule type" value="Genomic_DNA"/>
</dbReference>
<dbReference type="EMBL" id="AK127571">
    <property type="protein sequence ID" value="BAC87040.1"/>
    <property type="status" value="ALT_INIT"/>
    <property type="molecule type" value="mRNA"/>
</dbReference>
<dbReference type="EMBL" id="BX538150">
    <property type="protein sequence ID" value="CAD98036.1"/>
    <property type="molecule type" value="mRNA"/>
</dbReference>
<dbReference type="EMBL" id="BX538304">
    <property type="protein sequence ID" value="CAD98088.1"/>
    <property type="molecule type" value="mRNA"/>
</dbReference>
<dbReference type="EMBL" id="BX640686">
    <property type="protein sequence ID" value="CAE45813.1"/>
    <property type="molecule type" value="mRNA"/>
</dbReference>
<dbReference type="EMBL" id="CR933724">
    <property type="protein sequence ID" value="CAI46253.1"/>
    <property type="molecule type" value="mRNA"/>
</dbReference>
<dbReference type="EMBL" id="BN000687">
    <property type="protein sequence ID" value="CAH56764.1"/>
    <property type="molecule type" value="mRNA"/>
</dbReference>
<dbReference type="CCDS" id="CCDS31960.1">
    <molecule id="Q5SZK8-1"/>
</dbReference>
<dbReference type="RefSeq" id="NP_997244.4">
    <molecule id="Q5SZK8-1"/>
    <property type="nucleotide sequence ID" value="NM_207361.5"/>
</dbReference>
<dbReference type="BioGRID" id="131147">
    <property type="interactions" value="59"/>
</dbReference>
<dbReference type="CORUM" id="Q5SZK8"/>
<dbReference type="FunCoup" id="Q5SZK8">
    <property type="interactions" value="584"/>
</dbReference>
<dbReference type="IntAct" id="Q5SZK8">
    <property type="interactions" value="39"/>
</dbReference>
<dbReference type="STRING" id="9606.ENSP00000280481"/>
<dbReference type="GlyCosmos" id="Q5SZK8">
    <property type="glycosylation" value="5 sites, No reported glycans"/>
</dbReference>
<dbReference type="GlyGen" id="Q5SZK8">
    <property type="glycosylation" value="11 sites, 46 N-linked glycans (6 sites), 1 O-linked glycan (1 site)"/>
</dbReference>
<dbReference type="iPTMnet" id="Q5SZK8"/>
<dbReference type="PhosphoSitePlus" id="Q5SZK8"/>
<dbReference type="SwissPalm" id="Q5SZK8"/>
<dbReference type="BioMuta" id="FREM2"/>
<dbReference type="DMDM" id="73620903"/>
<dbReference type="jPOST" id="Q5SZK8"/>
<dbReference type="MassIVE" id="Q5SZK8"/>
<dbReference type="PaxDb" id="9606-ENSP00000280481"/>
<dbReference type="PeptideAtlas" id="Q5SZK8"/>
<dbReference type="ProteomicsDB" id="64078">
    <molecule id="Q5SZK8-1"/>
</dbReference>
<dbReference type="ProteomicsDB" id="64079">
    <molecule id="Q5SZK8-2"/>
</dbReference>
<dbReference type="Pumba" id="Q5SZK8"/>
<dbReference type="Antibodypedia" id="23253">
    <property type="antibodies" value="111 antibodies from 29 providers"/>
</dbReference>
<dbReference type="DNASU" id="341640"/>
<dbReference type="Ensembl" id="ENST00000280481.9">
    <molecule id="Q5SZK8-1"/>
    <property type="protein sequence ID" value="ENSP00000280481.7"/>
    <property type="gene ID" value="ENSG00000150893.11"/>
</dbReference>
<dbReference type="GeneID" id="341640"/>
<dbReference type="KEGG" id="hsa:341640"/>
<dbReference type="MANE-Select" id="ENST00000280481.9">
    <property type="protein sequence ID" value="ENSP00000280481.7"/>
    <property type="RefSeq nucleotide sequence ID" value="NM_207361.6"/>
    <property type="RefSeq protein sequence ID" value="NP_997244.4"/>
</dbReference>
<dbReference type="UCSC" id="uc001uwv.4">
    <molecule id="Q5SZK8-1"/>
    <property type="organism name" value="human"/>
</dbReference>
<dbReference type="AGR" id="HGNC:25396"/>
<dbReference type="CTD" id="341640"/>
<dbReference type="DisGeNET" id="341640"/>
<dbReference type="GeneCards" id="FREM2"/>
<dbReference type="HGNC" id="HGNC:25396">
    <property type="gene designation" value="FREM2"/>
</dbReference>
<dbReference type="HPA" id="ENSG00000150893">
    <property type="expression patterns" value="Tissue enhanced (kidney, thyroid gland)"/>
</dbReference>
<dbReference type="MalaCards" id="FREM2"/>
<dbReference type="MIM" id="123570">
    <property type="type" value="phenotype"/>
</dbReference>
<dbReference type="MIM" id="608945">
    <property type="type" value="gene"/>
</dbReference>
<dbReference type="MIM" id="617666">
    <property type="type" value="phenotype"/>
</dbReference>
<dbReference type="neXtProt" id="NX_Q5SZK8"/>
<dbReference type="OpenTargets" id="ENSG00000150893"/>
<dbReference type="Orphanet" id="98949">
    <property type="disease" value="Complete cryptophthalmia"/>
</dbReference>
<dbReference type="Orphanet" id="2052">
    <property type="disease" value="Fraser syndrome"/>
</dbReference>
<dbReference type="Orphanet" id="93100">
    <property type="disease" value="Renal agenesis, unilateral"/>
</dbReference>
<dbReference type="PharmGKB" id="PA134930862"/>
<dbReference type="VEuPathDB" id="HostDB:ENSG00000150893"/>
<dbReference type="eggNOG" id="KOG1306">
    <property type="taxonomic scope" value="Eukaryota"/>
</dbReference>
<dbReference type="eggNOG" id="KOG2090">
    <property type="taxonomic scope" value="Eukaryota"/>
</dbReference>
<dbReference type="eggNOG" id="KOG3597">
    <property type="taxonomic scope" value="Eukaryota"/>
</dbReference>
<dbReference type="GeneTree" id="ENSGT00940000155313"/>
<dbReference type="HOGENOM" id="CLU_000394_0_0_1"/>
<dbReference type="InParanoid" id="Q5SZK8"/>
<dbReference type="OMA" id="ILPWELN"/>
<dbReference type="OrthoDB" id="430044at2759"/>
<dbReference type="PAN-GO" id="Q5SZK8">
    <property type="GO annotations" value="2 GO annotations based on evolutionary models"/>
</dbReference>
<dbReference type="PhylomeDB" id="Q5SZK8"/>
<dbReference type="TreeFam" id="TF316876"/>
<dbReference type="PathwayCommons" id="Q5SZK8"/>
<dbReference type="SignaLink" id="Q5SZK8"/>
<dbReference type="BioGRID-ORCS" id="341640">
    <property type="hits" value="7 hits in 1138 CRISPR screens"/>
</dbReference>
<dbReference type="ChiTaRS" id="FREM2">
    <property type="organism name" value="human"/>
</dbReference>
<dbReference type="GeneWiki" id="FREM2"/>
<dbReference type="GenomeRNAi" id="341640"/>
<dbReference type="Pharos" id="Q5SZK8">
    <property type="development level" value="Tbio"/>
</dbReference>
<dbReference type="PRO" id="PR:Q5SZK8"/>
<dbReference type="Proteomes" id="UP000005640">
    <property type="component" value="Chromosome 13"/>
</dbReference>
<dbReference type="RNAct" id="Q5SZK8">
    <property type="molecule type" value="protein"/>
</dbReference>
<dbReference type="Bgee" id="ENSG00000150893">
    <property type="expression patterns" value="Expressed in adrenal tissue and 115 other cell types or tissues"/>
</dbReference>
<dbReference type="GO" id="GO:0005604">
    <property type="term" value="C:basement membrane"/>
    <property type="evidence" value="ECO:0007669"/>
    <property type="project" value="Ensembl"/>
</dbReference>
<dbReference type="GO" id="GO:0062023">
    <property type="term" value="C:collagen-containing extracellular matrix"/>
    <property type="evidence" value="ECO:0000318"/>
    <property type="project" value="GO_Central"/>
</dbReference>
<dbReference type="GO" id="GO:0070062">
    <property type="term" value="C:extracellular exosome"/>
    <property type="evidence" value="ECO:0007005"/>
    <property type="project" value="UniProtKB"/>
</dbReference>
<dbReference type="GO" id="GO:0005886">
    <property type="term" value="C:plasma membrane"/>
    <property type="evidence" value="ECO:0007669"/>
    <property type="project" value="UniProtKB-SubCell"/>
</dbReference>
<dbReference type="GO" id="GO:0046872">
    <property type="term" value="F:metal ion binding"/>
    <property type="evidence" value="ECO:0007669"/>
    <property type="project" value="UniProtKB-KW"/>
</dbReference>
<dbReference type="GO" id="GO:0009653">
    <property type="term" value="P:anatomical structure morphogenesis"/>
    <property type="evidence" value="ECO:0000318"/>
    <property type="project" value="GO_Central"/>
</dbReference>
<dbReference type="GO" id="GO:0007155">
    <property type="term" value="P:cell adhesion"/>
    <property type="evidence" value="ECO:0000315"/>
    <property type="project" value="UniProtKB"/>
</dbReference>
<dbReference type="GO" id="GO:0007154">
    <property type="term" value="P:cell communication"/>
    <property type="evidence" value="ECO:0007669"/>
    <property type="project" value="InterPro"/>
</dbReference>
<dbReference type="GO" id="GO:0042733">
    <property type="term" value="P:embryonic digit morphogenesis"/>
    <property type="evidence" value="ECO:0007669"/>
    <property type="project" value="Ensembl"/>
</dbReference>
<dbReference type="GO" id="GO:0001654">
    <property type="term" value="P:eye development"/>
    <property type="evidence" value="ECO:0000315"/>
    <property type="project" value="UniProtKB"/>
</dbReference>
<dbReference type="GO" id="GO:0007507">
    <property type="term" value="P:heart development"/>
    <property type="evidence" value="ECO:0007669"/>
    <property type="project" value="Ensembl"/>
</dbReference>
<dbReference type="GO" id="GO:0048839">
    <property type="term" value="P:inner ear development"/>
    <property type="evidence" value="ECO:0007669"/>
    <property type="project" value="Ensembl"/>
</dbReference>
<dbReference type="GO" id="GO:0001822">
    <property type="term" value="P:kidney development"/>
    <property type="evidence" value="ECO:0007669"/>
    <property type="project" value="Ensembl"/>
</dbReference>
<dbReference type="GO" id="GO:0002009">
    <property type="term" value="P:morphogenesis of an epithelium"/>
    <property type="evidence" value="ECO:0007669"/>
    <property type="project" value="Ensembl"/>
</dbReference>
<dbReference type="FunFam" id="2.60.40.2030:FF:000008">
    <property type="entry name" value="FRAS1-related extracellular matrix protein 2"/>
    <property type="match status" value="1"/>
</dbReference>
<dbReference type="FunFam" id="2.60.40.2030:FF:000011">
    <property type="entry name" value="Fras1-related extracellular matrix protein 2"/>
    <property type="match status" value="1"/>
</dbReference>
<dbReference type="FunFam" id="2.60.40.2030:FF:000018">
    <property type="entry name" value="Fras1-related extracellular matrix protein 2"/>
    <property type="match status" value="1"/>
</dbReference>
<dbReference type="FunFam" id="2.60.40.2030:FF:000040">
    <property type="entry name" value="Fras1-related extracellular matrix protein 2"/>
    <property type="match status" value="1"/>
</dbReference>
<dbReference type="FunFam" id="2.60.40.2030:FF:000006">
    <property type="entry name" value="Fraser extracellular matrix complex subunit 1"/>
    <property type="match status" value="1"/>
</dbReference>
<dbReference type="Gene3D" id="2.60.40.2030">
    <property type="match status" value="5"/>
</dbReference>
<dbReference type="InterPro" id="IPR038081">
    <property type="entry name" value="CalX-like_sf"/>
</dbReference>
<dbReference type="InterPro" id="IPR003644">
    <property type="entry name" value="Calx_beta"/>
</dbReference>
<dbReference type="InterPro" id="IPR039005">
    <property type="entry name" value="CSPG_rpt"/>
</dbReference>
<dbReference type="InterPro" id="IPR045658">
    <property type="entry name" value="FRAS1-rel_N"/>
</dbReference>
<dbReference type="InterPro" id="IPR051561">
    <property type="entry name" value="FRAS1_ECM"/>
</dbReference>
<dbReference type="PANTHER" id="PTHR45739:SF4">
    <property type="entry name" value="FRAS1-RELATED EXTRACELLULAR MATRIX PROTEIN 2"/>
    <property type="match status" value="1"/>
</dbReference>
<dbReference type="PANTHER" id="PTHR45739">
    <property type="entry name" value="MATRIX PROTEIN, PUTATIVE-RELATED"/>
    <property type="match status" value="1"/>
</dbReference>
<dbReference type="Pfam" id="PF16184">
    <property type="entry name" value="Cadherin_3"/>
    <property type="match status" value="12"/>
</dbReference>
<dbReference type="Pfam" id="PF03160">
    <property type="entry name" value="Calx-beta"/>
    <property type="match status" value="4"/>
</dbReference>
<dbReference type="Pfam" id="PF19309">
    <property type="entry name" value="Frem_N"/>
    <property type="match status" value="1"/>
</dbReference>
<dbReference type="SMART" id="SM00237">
    <property type="entry name" value="Calx_beta"/>
    <property type="match status" value="5"/>
</dbReference>
<dbReference type="SUPFAM" id="SSF141072">
    <property type="entry name" value="CalX-like"/>
    <property type="match status" value="5"/>
</dbReference>
<dbReference type="PROSITE" id="PS51854">
    <property type="entry name" value="CSPG"/>
    <property type="match status" value="12"/>
</dbReference>
<comment type="function">
    <text evidence="6 9 10">Extracellular matrix protein required for maintenance of the integrity of the skin epithelium and for maintenance of renal epithelia (PubMed:15838507). Required for epidermal adhesion (PubMed:15838507). Involved in the development of eyelids and the anterior segment of the eyeballs (PubMed:29688405, PubMed:30802441).</text>
</comment>
<comment type="subunit">
    <text evidence="9">Interacts with FREM1.</text>
</comment>
<comment type="interaction">
    <interactant intactId="EBI-20737564">
        <id>Q5SZK8</id>
    </interactant>
    <interactant intactId="EBI-21460642">
        <id>Q5H8C1</id>
        <label>FREM1</label>
    </interactant>
    <organismsDiffer>false</organismsDiffer>
    <experiments>2</experiments>
</comment>
<comment type="subcellular location">
    <subcellularLocation>
        <location evidence="13">Cell membrane</location>
        <topology evidence="2">Single-pass type I membrane protein</topology>
    </subcellularLocation>
</comment>
<comment type="alternative products">
    <event type="alternative splicing"/>
    <isoform>
        <id>Q5SZK8-1</id>
        <name>1</name>
        <sequence type="displayed"/>
    </isoform>
    <isoform>
        <id>Q5SZK8-2</id>
        <name>2</name>
        <sequence type="described" ref="VSP_015035 VSP_015036"/>
    </isoform>
</comment>
<comment type="domain">
    <text evidence="1">The Calx-beta domains bind calcium with high affinity and undergo a major conformational shift upon binding.</text>
</comment>
<comment type="disease" evidence="6 9 10">
    <disease id="DI-05098">
        <name>Fraser syndrome 2</name>
        <acronym>FRASRS2</acronym>
        <description>A form of Fraser syndrome, an autosomal recessive disorder characterized by cryptophthalmos, cutaneous syndactyly, and urogenital abnormalities including renal agenesis or hypoplasia. Additional features include abnormalities of the larynx, ear malformations, and facial abnormalities.</description>
        <dbReference type="MIM" id="617666"/>
    </disease>
    <text>The disease is caused by variants affecting the gene represented in this entry.</text>
</comment>
<comment type="disease" evidence="9 10">
    <disease id="DI-05544">
        <name>Cryptophthalmos, unilateral or bilateral, isolated</name>
        <acronym>CRYPTOP</acronym>
        <description>An autosomal dominant, rare condition characterized by congenital eyelid malformation with an underlying malformed eye. It can be bilateral or unilateral and is classified into complete (typical), incomplete (atypical) and abortive (congenital symblepharon) forms. The skin of patients with complete cryptophthalmos extends uninterrupted from the forehead to the cheek, whereas incomplete cryptophthalmos exists when there is medial eyelid fusion, but coincident intact lateral structures. The symblepharon variety presents with fusion of the upper eyelid skin to the superior aspect of the globe. The complete variety is the most common form.</description>
        <dbReference type="MIM" id="123570"/>
    </disease>
    <text>The disease is caused by variants affecting the gene represented in this entry.</text>
</comment>
<comment type="similarity">
    <text evidence="12">Belongs to the FRAS1 family.</text>
</comment>
<comment type="sequence caution" evidence="12">
    <conflict type="erroneous initiation">
        <sequence resource="EMBL-CDS" id="BAC87040"/>
    </conflict>
</comment>
<feature type="signal peptide" evidence="2">
    <location>
        <begin position="1"/>
        <end position="46"/>
    </location>
</feature>
<feature type="chain" id="PRO_0000010124" description="FRAS1-related extracellular matrix protein 2">
    <location>
        <begin position="47"/>
        <end position="3169"/>
    </location>
</feature>
<feature type="topological domain" description="Extracellular" evidence="2">
    <location>
        <begin position="47"/>
        <end position="3113"/>
    </location>
</feature>
<feature type="transmembrane region" description="Helical" evidence="2">
    <location>
        <begin position="3114"/>
        <end position="3134"/>
    </location>
</feature>
<feature type="topological domain" description="Cytoplasmic" evidence="2">
    <location>
        <begin position="3135"/>
        <end position="3169"/>
    </location>
</feature>
<feature type="repeat" description="CSPG 1" evidence="3">
    <location>
        <begin position="319"/>
        <end position="413"/>
    </location>
</feature>
<feature type="repeat" description="CSPG 2" evidence="3">
    <location>
        <begin position="438"/>
        <end position="537"/>
    </location>
</feature>
<feature type="repeat" description="CSPG 3" evidence="3">
    <location>
        <begin position="560"/>
        <end position="675"/>
    </location>
</feature>
<feature type="repeat" description="CSPG 4" evidence="3">
    <location>
        <begin position="700"/>
        <end position="807"/>
    </location>
</feature>
<feature type="repeat" description="CSPG 5" evidence="3">
    <location>
        <begin position="828"/>
        <end position="919"/>
    </location>
</feature>
<feature type="repeat" description="CSPG 6" evidence="3">
    <location>
        <begin position="945"/>
        <end position="1037"/>
    </location>
</feature>
<feature type="repeat" description="CSPG 7" evidence="3">
    <location>
        <begin position="1066"/>
        <end position="1168"/>
    </location>
</feature>
<feature type="repeat" description="CSPG 8" evidence="3">
    <location>
        <begin position="1189"/>
        <end position="1282"/>
    </location>
</feature>
<feature type="repeat" description="CSPG 9" evidence="3">
    <location>
        <begin position="1303"/>
        <end position="1399"/>
    </location>
</feature>
<feature type="repeat" description="CSPG 10" evidence="3">
    <location>
        <begin position="1420"/>
        <end position="1512"/>
    </location>
</feature>
<feature type="repeat" description="CSPG 11" evidence="3">
    <location>
        <begin position="1532"/>
        <end position="1621"/>
    </location>
</feature>
<feature type="repeat" description="CSPG 12" evidence="3">
    <location>
        <begin position="1655"/>
        <end position="1752"/>
    </location>
</feature>
<feature type="domain" description="Calx-beta 1">
    <location>
        <begin position="1759"/>
        <end position="1858"/>
    </location>
</feature>
<feature type="domain" description="Calx-beta 2">
    <location>
        <begin position="1871"/>
        <end position="1982"/>
    </location>
</feature>
<feature type="domain" description="Calx-beta 3">
    <location>
        <begin position="1997"/>
        <end position="2103"/>
    </location>
</feature>
<feature type="domain" description="Calx-beta 4">
    <location>
        <begin position="2118"/>
        <end position="2220"/>
    </location>
</feature>
<feature type="domain" description="Calx-beta 5">
    <location>
        <begin position="2238"/>
        <end position="2342"/>
    </location>
</feature>
<feature type="region of interest" description="Disordered" evidence="4">
    <location>
        <begin position="1"/>
        <end position="24"/>
    </location>
</feature>
<feature type="region of interest" description="Disordered" evidence="4">
    <location>
        <begin position="3036"/>
        <end position="3057"/>
    </location>
</feature>
<feature type="region of interest" description="Disordered" evidence="4">
    <location>
        <begin position="3141"/>
        <end position="3169"/>
    </location>
</feature>
<feature type="compositionally biased region" description="Polar residues" evidence="4">
    <location>
        <begin position="8"/>
        <end position="21"/>
    </location>
</feature>
<feature type="compositionally biased region" description="Polar residues" evidence="4">
    <location>
        <begin position="3037"/>
        <end position="3047"/>
    </location>
</feature>
<feature type="glycosylation site" description="N-linked (GlcNAc...) asparagine" evidence="2">
    <location>
        <position position="358"/>
    </location>
</feature>
<feature type="glycosylation site" description="N-linked (GlcNAc...) asparagine" evidence="2">
    <location>
        <position position="1244"/>
    </location>
</feature>
<feature type="glycosylation site" description="N-linked (GlcNAc...) asparagine" evidence="2">
    <location>
        <position position="1369"/>
    </location>
</feature>
<feature type="glycosylation site" description="N-linked (GlcNAc...) asparagine" evidence="2">
    <location>
        <position position="1584"/>
    </location>
</feature>
<feature type="glycosylation site" description="N-linked (GlcNAc...) asparagine" evidence="7">
    <location>
        <position position="1741"/>
    </location>
</feature>
<feature type="splice variant" id="VSP_015035" description="In isoform 2." evidence="11">
    <original>LNLVQ</original>
    <variation>QIYNI</variation>
    <location>
        <begin position="2663"/>
        <end position="2667"/>
    </location>
</feature>
<feature type="splice variant" id="VSP_015036" description="In isoform 2." evidence="11">
    <location>
        <begin position="2668"/>
        <end position="3169"/>
    </location>
</feature>
<feature type="sequence variant" id="VAR_061174" description="In dbSNP:rs58363253.">
    <original>R</original>
    <variation>K</variation>
    <location>
        <position position="722"/>
    </location>
</feature>
<feature type="sequence variant" id="VAR_082581" description="In CRYPTOP." evidence="10">
    <location>
        <begin position="736"/>
        <end position="3169"/>
    </location>
</feature>
<feature type="sequence variant" id="VAR_061175" description="In dbSNP:rs2496423.">
    <original>P</original>
    <variation>S</variation>
    <location>
        <position position="745"/>
    </location>
</feature>
<feature type="sequence variant" id="VAR_033933" description="In dbSNP:rs7327915.">
    <original>V</original>
    <variation>M</variation>
    <location>
        <position position="770"/>
    </location>
</feature>
<feature type="sequence variant" id="VAR_033934" description="In dbSNP:rs7329939.">
    <original>L</original>
    <variation>V</variation>
    <location>
        <position position="868"/>
    </location>
</feature>
<feature type="sequence variant" id="VAR_033935" description="In dbSNP:rs2496424.">
    <original>M</original>
    <variation>K</variation>
    <location>
        <position position="1039"/>
    </location>
</feature>
<feature type="sequence variant" id="VAR_037569" description="In dbSNP:rs17058433.">
    <original>I</original>
    <variation>S</variation>
    <location>
        <position position="1045"/>
    </location>
</feature>
<feature type="sequence variant" id="VAR_033936" description="In dbSNP:rs2496425.">
    <original>F</original>
    <variation>S</variation>
    <location>
        <position position="1070"/>
    </location>
</feature>
<feature type="sequence variant" id="VAR_082582" description="In CRYPTOP." evidence="10">
    <location>
        <begin position="1355"/>
        <end position="3169"/>
    </location>
</feature>
<feature type="sequence variant" id="VAR_037570" description="In dbSNP:rs1868463.">
    <original>R</original>
    <variation>H</variation>
    <location>
        <position position="1668"/>
    </location>
</feature>
<feature type="sequence variant" id="VAR_082583" description="In CRYPTOP." evidence="10">
    <location>
        <begin position="1770"/>
        <end position="3169"/>
    </location>
</feature>
<feature type="sequence variant" id="VAR_033937" description="In dbSNP:rs9603422.">
    <original>R</original>
    <variation>W</variation>
    <location>
        <position position="1840"/>
    </location>
</feature>
<feature type="sequence variant" id="VAR_023201" description="In FRASRS2; may impair calcium-binding in the 2nd Calx-beta domain; decreases cell adhesion; decreases interaction with FREM1; dbSNP:rs121434356." evidence="6 9">
    <original>E</original>
    <variation>K</variation>
    <location>
        <position position="1972"/>
    </location>
</feature>
<feature type="sequence variant" id="VAR_023202" description="In dbSNP:rs9548505." evidence="8">
    <original>R</original>
    <variation>C</variation>
    <location>
        <position position="2066"/>
    </location>
</feature>
<feature type="sequence variant" id="VAR_023203" description="In dbSNP:rs9548506." evidence="8">
    <original>T</original>
    <variation>S</variation>
    <location>
        <position position="2153"/>
    </location>
</feature>
<feature type="sequence variant" id="VAR_082584" description="In CRYPTOP and FRASRS2; decreases cell adhesion; decreases interaction with FREM1; dbSNP:rs114837786." evidence="9 10">
    <original>R</original>
    <variation>W</variation>
    <location>
        <position position="2167"/>
    </location>
</feature>
<feature type="sequence variant" id="VAR_023204" description="In dbSNP:rs9548509." evidence="5 8">
    <original>T</original>
    <variation>I</variation>
    <location>
        <position position="2326"/>
    </location>
</feature>
<feature type="sequence variant" id="VAR_037571" description="In dbSNP:rs7996253.">
    <original>A</original>
    <variation>V</variation>
    <location>
        <position position="2962"/>
    </location>
</feature>
<feature type="sequence conflict" description="In Ref. 2; CAD98088." evidence="12" ref="2">
    <original>V</original>
    <variation>A</variation>
    <location>
        <position position="2030"/>
    </location>
</feature>
<feature type="sequence conflict" description="In Ref. 3; BAC87040." evidence="12" ref="3">
    <original>E</original>
    <variation>K</variation>
    <location>
        <position position="2112"/>
    </location>
</feature>
<feature type="sequence conflict" description="In Ref. 3; BAC87040." evidence="12" ref="3">
    <original>A</original>
    <variation>T</variation>
    <location>
        <position position="2116"/>
    </location>
</feature>
<feature type="sequence conflict" description="In Ref. 2; CAD98088." evidence="12" ref="2">
    <original>Y</original>
    <variation>H</variation>
    <location>
        <position position="2359"/>
    </location>
</feature>
<feature type="sequence conflict" description="In Ref. 3; BAC87040." evidence="12" ref="3">
    <original>L</original>
    <variation>P</variation>
    <location>
        <position position="2508"/>
    </location>
</feature>
<feature type="sequence conflict" description="In Ref. 3; BAC87040." evidence="12" ref="3">
    <original>E</original>
    <variation>K</variation>
    <location>
        <position position="2638"/>
    </location>
</feature>
<feature type="sequence conflict" description="In Ref. 2; CAD98088." evidence="12" ref="2">
    <original>F</original>
    <variation>I</variation>
    <location>
        <position position="2682"/>
    </location>
</feature>
<feature type="sequence conflict" description="In Ref. 2; CAI46253." evidence="12" ref="2">
    <original>T</original>
    <variation>S</variation>
    <location>
        <position position="2777"/>
    </location>
</feature>
<feature type="sequence conflict" description="In Ref. 2; CAD98036." evidence="12" ref="2">
    <original>E</original>
    <variation>G</variation>
    <location>
        <position position="2786"/>
    </location>
</feature>
<feature type="sequence conflict" description="In Ref. 2; CAD98088/CAE45813." evidence="12" ref="2">
    <original>V</original>
    <variation>I</variation>
    <location>
        <position position="2968"/>
    </location>
</feature>
<feature type="sequence conflict" description="In Ref. 2; CAD98088." evidence="12" ref="2">
    <original>D</original>
    <variation>G</variation>
    <location>
        <position position="3081"/>
    </location>
</feature>
<protein>
    <recommendedName>
        <fullName>FRAS1-related extracellular matrix protein 2</fullName>
    </recommendedName>
    <alternativeName>
        <fullName>ECM3 homolog</fullName>
    </alternativeName>
</protein>
<reference key="1">
    <citation type="journal article" date="2004" name="Nature">
        <title>The DNA sequence and analysis of human chromosome 13.</title>
        <authorList>
            <person name="Dunham A."/>
            <person name="Matthews L.H."/>
            <person name="Burton J."/>
            <person name="Ashurst J.L."/>
            <person name="Howe K.L."/>
            <person name="Ashcroft K.J."/>
            <person name="Beare D.M."/>
            <person name="Burford D.C."/>
            <person name="Hunt S.E."/>
            <person name="Griffiths-Jones S."/>
            <person name="Jones M.C."/>
            <person name="Keenan S.J."/>
            <person name="Oliver K."/>
            <person name="Scott C.E."/>
            <person name="Ainscough R."/>
            <person name="Almeida J.P."/>
            <person name="Ambrose K.D."/>
            <person name="Andrews D.T."/>
            <person name="Ashwell R.I.S."/>
            <person name="Babbage A.K."/>
            <person name="Bagguley C.L."/>
            <person name="Bailey J."/>
            <person name="Bannerjee R."/>
            <person name="Barlow K.F."/>
            <person name="Bates K."/>
            <person name="Beasley H."/>
            <person name="Bird C.P."/>
            <person name="Bray-Allen S."/>
            <person name="Brown A.J."/>
            <person name="Brown J.Y."/>
            <person name="Burrill W."/>
            <person name="Carder C."/>
            <person name="Carter N.P."/>
            <person name="Chapman J.C."/>
            <person name="Clamp M.E."/>
            <person name="Clark S.Y."/>
            <person name="Clarke G."/>
            <person name="Clee C.M."/>
            <person name="Clegg S.C."/>
            <person name="Cobley V."/>
            <person name="Collins J.E."/>
            <person name="Corby N."/>
            <person name="Coville G.J."/>
            <person name="Deloukas P."/>
            <person name="Dhami P."/>
            <person name="Dunham I."/>
            <person name="Dunn M."/>
            <person name="Earthrowl M.E."/>
            <person name="Ellington A.G."/>
            <person name="Faulkner L."/>
            <person name="Frankish A.G."/>
            <person name="Frankland J."/>
            <person name="French L."/>
            <person name="Garner P."/>
            <person name="Garnett J."/>
            <person name="Gilbert J.G.R."/>
            <person name="Gilson C.J."/>
            <person name="Ghori J."/>
            <person name="Grafham D.V."/>
            <person name="Gribble S.M."/>
            <person name="Griffiths C."/>
            <person name="Hall R.E."/>
            <person name="Hammond S."/>
            <person name="Harley J.L."/>
            <person name="Hart E.A."/>
            <person name="Heath P.D."/>
            <person name="Howden P.J."/>
            <person name="Huckle E.J."/>
            <person name="Hunt P.J."/>
            <person name="Hunt A.R."/>
            <person name="Johnson C."/>
            <person name="Johnson D."/>
            <person name="Kay M."/>
            <person name="Kimberley A.M."/>
            <person name="King A."/>
            <person name="Laird G.K."/>
            <person name="Langford C.J."/>
            <person name="Lawlor S."/>
            <person name="Leongamornlert D.A."/>
            <person name="Lloyd D.M."/>
            <person name="Lloyd C."/>
            <person name="Loveland J.E."/>
            <person name="Lovell J."/>
            <person name="Martin S."/>
            <person name="Mashreghi-Mohammadi M."/>
            <person name="McLaren S.J."/>
            <person name="McMurray A."/>
            <person name="Milne S."/>
            <person name="Moore M.J.F."/>
            <person name="Nickerson T."/>
            <person name="Palmer S.A."/>
            <person name="Pearce A.V."/>
            <person name="Peck A.I."/>
            <person name="Pelan S."/>
            <person name="Phillimore B."/>
            <person name="Porter K.M."/>
            <person name="Rice C.M."/>
            <person name="Searle S."/>
            <person name="Sehra H.K."/>
            <person name="Shownkeen R."/>
            <person name="Skuce C.D."/>
            <person name="Smith M."/>
            <person name="Steward C.A."/>
            <person name="Sycamore N."/>
            <person name="Tester J."/>
            <person name="Thomas D.W."/>
            <person name="Tracey A."/>
            <person name="Tromans A."/>
            <person name="Tubby B."/>
            <person name="Wall M."/>
            <person name="Wallis J.M."/>
            <person name="West A.P."/>
            <person name="Whitehead S.L."/>
            <person name="Willey D.L."/>
            <person name="Wilming L."/>
            <person name="Wray P.W."/>
            <person name="Wright M.W."/>
            <person name="Young L."/>
            <person name="Coulson A."/>
            <person name="Durbin R.M."/>
            <person name="Hubbard T."/>
            <person name="Sulston J.E."/>
            <person name="Beck S."/>
            <person name="Bentley D.R."/>
            <person name="Rogers J."/>
            <person name="Ross M.T."/>
        </authorList>
    </citation>
    <scope>NUCLEOTIDE SEQUENCE [LARGE SCALE GENOMIC DNA]</scope>
</reference>
<reference key="2">
    <citation type="journal article" date="2004" name="Nat. Genet.">
        <title>Complete sequencing and characterization of 21,243 full-length human cDNAs.</title>
        <authorList>
            <person name="Ota T."/>
            <person name="Suzuki Y."/>
            <person name="Nishikawa T."/>
            <person name="Otsuki T."/>
            <person name="Sugiyama T."/>
            <person name="Irie R."/>
            <person name="Wakamatsu A."/>
            <person name="Hayashi K."/>
            <person name="Sato H."/>
            <person name="Nagai K."/>
            <person name="Kimura K."/>
            <person name="Makita H."/>
            <person name="Sekine M."/>
            <person name="Obayashi M."/>
            <person name="Nishi T."/>
            <person name="Shibahara T."/>
            <person name="Tanaka T."/>
            <person name="Ishii S."/>
            <person name="Yamamoto J."/>
            <person name="Saito K."/>
            <person name="Kawai Y."/>
            <person name="Isono Y."/>
            <person name="Nakamura Y."/>
            <person name="Nagahari K."/>
            <person name="Murakami K."/>
            <person name="Yasuda T."/>
            <person name="Iwayanagi T."/>
            <person name="Wagatsuma M."/>
            <person name="Shiratori A."/>
            <person name="Sudo H."/>
            <person name="Hosoiri T."/>
            <person name="Kaku Y."/>
            <person name="Kodaira H."/>
            <person name="Kondo H."/>
            <person name="Sugawara M."/>
            <person name="Takahashi M."/>
            <person name="Kanda K."/>
            <person name="Yokoi T."/>
            <person name="Furuya T."/>
            <person name="Kikkawa E."/>
            <person name="Omura Y."/>
            <person name="Abe K."/>
            <person name="Kamihara K."/>
            <person name="Katsuta N."/>
            <person name="Sato K."/>
            <person name="Tanikawa M."/>
            <person name="Yamazaki M."/>
            <person name="Ninomiya K."/>
            <person name="Ishibashi T."/>
            <person name="Yamashita H."/>
            <person name="Murakawa K."/>
            <person name="Fujimori K."/>
            <person name="Tanai H."/>
            <person name="Kimata M."/>
            <person name="Watanabe M."/>
            <person name="Hiraoka S."/>
            <person name="Chiba Y."/>
            <person name="Ishida S."/>
            <person name="Ono Y."/>
            <person name="Takiguchi S."/>
            <person name="Watanabe S."/>
            <person name="Yosida M."/>
            <person name="Hotuta T."/>
            <person name="Kusano J."/>
            <person name="Kanehori K."/>
            <person name="Takahashi-Fujii A."/>
            <person name="Hara H."/>
            <person name="Tanase T.-O."/>
            <person name="Nomura Y."/>
            <person name="Togiya S."/>
            <person name="Komai F."/>
            <person name="Hara R."/>
            <person name="Takeuchi K."/>
            <person name="Arita M."/>
            <person name="Imose N."/>
            <person name="Musashino K."/>
            <person name="Yuuki H."/>
            <person name="Oshima A."/>
            <person name="Sasaki N."/>
            <person name="Aotsuka S."/>
            <person name="Yoshikawa Y."/>
            <person name="Matsunawa H."/>
            <person name="Ichihara T."/>
            <person name="Shiohata N."/>
            <person name="Sano S."/>
            <person name="Moriya S."/>
            <person name="Momiyama H."/>
            <person name="Satoh N."/>
            <person name="Takami S."/>
            <person name="Terashima Y."/>
            <person name="Suzuki O."/>
            <person name="Nakagawa S."/>
            <person name="Senoh A."/>
            <person name="Mizoguchi H."/>
            <person name="Goto Y."/>
            <person name="Shimizu F."/>
            <person name="Wakebe H."/>
            <person name="Hishigaki H."/>
            <person name="Watanabe T."/>
            <person name="Sugiyama A."/>
            <person name="Takemoto M."/>
            <person name="Kawakami B."/>
            <person name="Yamazaki M."/>
            <person name="Watanabe K."/>
            <person name="Kumagai A."/>
            <person name="Itakura S."/>
            <person name="Fukuzumi Y."/>
            <person name="Fujimori Y."/>
            <person name="Komiyama M."/>
            <person name="Tashiro H."/>
            <person name="Tanigami A."/>
            <person name="Fujiwara T."/>
            <person name="Ono T."/>
            <person name="Yamada K."/>
            <person name="Fujii Y."/>
            <person name="Ozaki K."/>
            <person name="Hirao M."/>
            <person name="Ohmori Y."/>
            <person name="Kawabata A."/>
            <person name="Hikiji T."/>
            <person name="Kobatake N."/>
            <person name="Inagaki H."/>
            <person name="Ikema Y."/>
            <person name="Okamoto S."/>
            <person name="Okitani R."/>
            <person name="Kawakami T."/>
            <person name="Noguchi S."/>
            <person name="Itoh T."/>
            <person name="Shigeta K."/>
            <person name="Senba T."/>
            <person name="Matsumura K."/>
            <person name="Nakajima Y."/>
            <person name="Mizuno T."/>
            <person name="Morinaga M."/>
            <person name="Sasaki M."/>
            <person name="Togashi T."/>
            <person name="Oyama M."/>
            <person name="Hata H."/>
            <person name="Watanabe M."/>
            <person name="Komatsu T."/>
            <person name="Mizushima-Sugano J."/>
            <person name="Satoh T."/>
            <person name="Shirai Y."/>
            <person name="Takahashi Y."/>
            <person name="Nakagawa K."/>
            <person name="Okumura K."/>
            <person name="Nagase T."/>
            <person name="Nomura N."/>
            <person name="Kikuchi H."/>
            <person name="Masuho Y."/>
            <person name="Yamashita R."/>
            <person name="Nakai K."/>
            <person name="Yada T."/>
            <person name="Nakamura Y."/>
            <person name="Ohara O."/>
            <person name="Isogai T."/>
            <person name="Sugano S."/>
        </authorList>
    </citation>
    <scope>NUCLEOTIDE SEQUENCE [LARGE SCALE MRNA] OF 1817-3169 (ISOFORM 2)</scope>
    <scope>VARIANT ILE-2326</scope>
    <source>
        <tissue>Tongue</tissue>
    </source>
</reference>
<reference key="3">
    <citation type="journal article" date="2007" name="BMC Genomics">
        <title>The full-ORF clone resource of the German cDNA consortium.</title>
        <authorList>
            <person name="Bechtel S."/>
            <person name="Rosenfelder H."/>
            <person name="Duda A."/>
            <person name="Schmidt C.P."/>
            <person name="Ernst U."/>
            <person name="Wellenreuther R."/>
            <person name="Mehrle A."/>
            <person name="Schuster C."/>
            <person name="Bahr A."/>
            <person name="Bloecker H."/>
            <person name="Heubner D."/>
            <person name="Hoerlein A."/>
            <person name="Michel G."/>
            <person name="Wedler H."/>
            <person name="Koehrer K."/>
            <person name="Ottenwaelder B."/>
            <person name="Poustka A."/>
            <person name="Wiemann S."/>
            <person name="Schupp I."/>
        </authorList>
    </citation>
    <scope>NUCLEOTIDE SEQUENCE [LARGE SCALE MRNA] OF 1910-3169 (ISOFORM 1)</scope>
    <scope>VARIANTS CYS-2066; SER-2153 AND ILE-2326</scope>
    <source>
        <tissue>Fetal kidney</tissue>
    </source>
</reference>
<reference key="4">
    <citation type="journal article" date="2005" name="J. Proteome Res.">
        <title>Human plasma N-glycoproteome analysis by immunoaffinity subtraction, hydrazide chemistry, and mass spectrometry.</title>
        <authorList>
            <person name="Liu T."/>
            <person name="Qian W.-J."/>
            <person name="Gritsenko M.A."/>
            <person name="Camp D.G. II"/>
            <person name="Monroe M.E."/>
            <person name="Moore R.J."/>
            <person name="Smith R.D."/>
        </authorList>
    </citation>
    <scope>GLYCOSYLATION [LARGE SCALE ANALYSIS] AT ASN-1741</scope>
    <source>
        <tissue>Plasma</tissue>
    </source>
</reference>
<reference key="5">
    <citation type="journal article" date="2005" name="Nat. Genet.">
        <title>Identification of a new gene mutated in Fraser syndrome and mouse myelencephalic blebs.</title>
        <authorList>
            <person name="Jadeja S."/>
            <person name="Smyth I."/>
            <person name="Pitera J.E."/>
            <person name="Taylor M.S."/>
            <person name="van Haelst M."/>
            <person name="Bentley E."/>
            <person name="McGregor L."/>
            <person name="Hopkins J."/>
            <person name="Chalepakis G."/>
            <person name="Philip N."/>
            <person name="Perez Aytes A."/>
            <person name="Watt F.M."/>
            <person name="Darling S.M."/>
            <person name="Jackson I."/>
            <person name="Woolf A.S."/>
            <person name="Scambler P.J."/>
        </authorList>
    </citation>
    <scope>IDENTIFICATION (ISOFORM 1)</scope>
    <scope>FUNCTION</scope>
    <scope>INVOLVEMENT IN FRASRS2</scope>
    <scope>VARIANT FRASRS2 LYS-1972</scope>
</reference>
<reference key="6">
    <citation type="journal article" date="2018" name="Hum. Mol. Genet.">
        <title>A homozygous mutation p.Arg2167Trp in FREM2 causes isolated cryptophthalmos.</title>
        <authorList>
            <person name="Yu Q."/>
            <person name="Lin B."/>
            <person name="Xie S."/>
            <person name="Gao S."/>
            <person name="Li W."/>
            <person name="Liu Y."/>
            <person name="Wang H."/>
            <person name="Huang D."/>
            <person name="Xie Z."/>
        </authorList>
    </citation>
    <scope>FUNCTION</scope>
    <scope>INTERACTION WITH FREM1</scope>
    <scope>INVOLVEMENT IN CRYPTOP</scope>
    <scope>VARIANT CRYPTOP TRP-2167</scope>
    <scope>CHARACTERIZATION OF VARIANT CRYPTOP TRP-2167</scope>
    <scope>VARIANT FRASRS2 TRP-2167</scope>
    <scope>CHARACTERIZATION OF VARIANTS FRASRS2 LYS-1972 AND TRP-2167</scope>
</reference>
<reference key="7">
    <citation type="journal article" date="2019" name="Exp. Eye Res.">
        <title>Loss-of-function mutations in FREM2 disrupt eye morphogenesis.</title>
        <authorList>
            <person name="Zhang X."/>
            <person name="Wang D."/>
            <person name="Dongye M."/>
            <person name="Zhu Y."/>
            <person name="Chen C."/>
            <person name="Wang R."/>
            <person name="Long E."/>
            <person name="Liu Z."/>
            <person name="Wu X."/>
            <person name="Lin D."/>
            <person name="Chen J."/>
            <person name="Lin Z."/>
            <person name="Wang J."/>
            <person name="Li W."/>
            <person name="Li Y."/>
            <person name="Li D."/>
            <person name="Lin H."/>
        </authorList>
    </citation>
    <scope>FUNCTION</scope>
    <scope>INVOLVEMENT IN CRYPTOP</scope>
    <scope>VARIANTS CRYPTOP 736-ARG--VAL-3169 DEL; 1355-ARG--VAL-3169 DEL; 1770-TRP--VAL-3169 DEL AND TRP-2167</scope>
</reference>
<gene>
    <name type="primary">FREM2</name>
</gene>
<evidence type="ECO:0000250" key="1"/>
<evidence type="ECO:0000255" key="2"/>
<evidence type="ECO:0000255" key="3">
    <source>
        <dbReference type="PROSITE-ProRule" id="PRU01201"/>
    </source>
</evidence>
<evidence type="ECO:0000256" key="4">
    <source>
        <dbReference type="SAM" id="MobiDB-lite"/>
    </source>
</evidence>
<evidence type="ECO:0000269" key="5">
    <source>
    </source>
</evidence>
<evidence type="ECO:0000269" key="6">
    <source>
    </source>
</evidence>
<evidence type="ECO:0000269" key="7">
    <source>
    </source>
</evidence>
<evidence type="ECO:0000269" key="8">
    <source>
    </source>
</evidence>
<evidence type="ECO:0000269" key="9">
    <source>
    </source>
</evidence>
<evidence type="ECO:0000269" key="10">
    <source>
    </source>
</evidence>
<evidence type="ECO:0000303" key="11">
    <source>
    </source>
</evidence>
<evidence type="ECO:0000305" key="12"/>
<evidence type="ECO:0000305" key="13">
    <source>
    </source>
</evidence>
<organism>
    <name type="scientific">Homo sapiens</name>
    <name type="common">Human</name>
    <dbReference type="NCBI Taxonomy" id="9606"/>
    <lineage>
        <taxon>Eukaryota</taxon>
        <taxon>Metazoa</taxon>
        <taxon>Chordata</taxon>
        <taxon>Craniata</taxon>
        <taxon>Vertebrata</taxon>
        <taxon>Euteleostomi</taxon>
        <taxon>Mammalia</taxon>
        <taxon>Eutheria</taxon>
        <taxon>Euarchontoglires</taxon>
        <taxon>Primates</taxon>
        <taxon>Haplorrhini</taxon>
        <taxon>Catarrhini</taxon>
        <taxon>Hominidae</taxon>
        <taxon>Homo</taxon>
    </lineage>
</organism>